<dbReference type="EMBL" id="AF022930">
    <property type="protein sequence ID" value="AAD01754.1"/>
    <property type="molecule type" value="Genomic_DNA"/>
</dbReference>
<dbReference type="SMR" id="Q9ZXI1"/>
<dbReference type="GO" id="GO:0044423">
    <property type="term" value="C:virion component"/>
    <property type="evidence" value="ECO:0007669"/>
    <property type="project" value="UniProtKB-KW"/>
</dbReference>
<accession>Q9ZXI1</accession>
<proteinExistence type="inferred from homology"/>
<gene>
    <name type="primary">22</name>
</gene>
<name>SCAF_BPAR1</name>
<feature type="chain" id="PRO_0000165011" description="Capsid assembly scaffolding protein">
    <location>
        <begin position="1"/>
        <end position="269"/>
    </location>
</feature>
<feature type="peptide" id="PRO_0000436970" description="Internal peptide VII" evidence="1">
    <location>
        <begin position="62"/>
        <end position="84"/>
    </location>
</feature>
<protein>
    <recommendedName>
        <fullName>Capsid assembly scaffolding protein</fullName>
    </recommendedName>
    <alternativeName>
        <fullName>Gene product 22</fullName>
        <shortName>gp22</shortName>
    </alternativeName>
    <alternativeName>
        <fullName>Head morphogenesis protein</fullName>
    </alternativeName>
    <alternativeName>
        <fullName>Major prohead-scaffolding core protein Gp22</fullName>
    </alternativeName>
    <alternativeName>
        <fullName>Scaffold protein</fullName>
    </alternativeName>
    <component>
        <recommendedName>
            <fullName>Internal peptide VII</fullName>
        </recommendedName>
    </component>
</protein>
<organism>
    <name type="scientific">Escherichia phage AR1</name>
    <name type="common">Bacteriophage AR1</name>
    <dbReference type="NCBI Taxonomy" id="66711"/>
    <lineage>
        <taxon>Viruses</taxon>
        <taxon>Duplodnaviria</taxon>
        <taxon>Heunggongvirae</taxon>
        <taxon>Uroviricota</taxon>
        <taxon>Caudoviricetes</taxon>
        <taxon>Straboviridae</taxon>
        <taxon>Tevenvirinae</taxon>
        <taxon>Tequatrovirus</taxon>
        <taxon>Tequatrovirus ar1</taxon>
    </lineage>
</organism>
<reference key="1">
    <citation type="journal article" date="1998" name="J. Biomed. Sci.">
        <title>Characterization of a phage specific to hemorrhagic Escherichia coli O157:H7 and disclosure of variations in host outer membrane protein ompC.</title>
        <authorList>
            <person name="Yu S.L."/>
            <person name="Ding H.C."/>
            <person name="Seah J.N."/>
            <person name="Wu K.M."/>
            <person name="Chang Y.C."/>
            <person name="Chang K.S."/>
            <person name="Tam M.F."/>
            <person name="Syu W.J."/>
        </authorList>
    </citation>
    <scope>NUCLEOTIDE SEQUENCE [GENOMIC DNA]</scope>
</reference>
<keyword id="KW-0118">Viral capsid assembly</keyword>
<keyword id="KW-1188">Viral release from host cell</keyword>
<keyword id="KW-0946">Virion</keyword>
<evidence type="ECO:0000250" key="1">
    <source>
        <dbReference type="UniProtKB" id="P04534"/>
    </source>
</evidence>
<evidence type="ECO:0000305" key="2"/>
<organismHost>
    <name type="scientific">Escherichia coli O157:H7</name>
    <dbReference type="NCBI Taxonomy" id="83334"/>
</organismHost>
<comment type="function">
    <molecule>Capsid assembly scaffolding protein</molecule>
    <text evidence="1">Scaffolding protein involved in the icosahedric procapsid assembly. Coassembles with the capsid proteins to form the procapsid, in which the scaffolding protein is found within the external shell of icosahedrally arranged capsid protein subunits. In a subsequent step the scaffolding protein molecules are cleaved by the viral protease and released, except for the internal peptide VII.</text>
</comment>
<comment type="function">
    <molecule>Internal peptide VII</molecule>
    <text evidence="1">Cleavage product of Gp22 that is incorporated into the mature phage head.</text>
</comment>
<comment type="subcellular location">
    <molecule>Internal peptide VII</molecule>
    <subcellularLocation>
        <location evidence="1">Virion</location>
    </subcellularLocation>
</comment>
<comment type="similarity">
    <text evidence="2">Belongs to the T4likevirus capsid assembly scaffolding protein family.</text>
</comment>
<sequence length="269" mass="29961">MLKEQLIAEAQKIDASVALDSIFESVNISPEAKETFGTVFEATVKQHAVKLAESHIAKIAEKAEEEVEKNKEEAEEKAEKKIAEQASKFLDHLAKEWLTENKLAVDKGIKAELFESMLGGLKELFVEHNVVVPEESVDVVAEMEEELQEHKEESARLFEELNKRDAYINYVQREVALSESTKDLTESQKEKVSALVEGIDYSDAFSSKLSAIVEMVKKSNKDESTITESINTPDTEEAGLNFVTEAVEDKSAQGAEDIVSVYAKVASRF</sequence>